<proteinExistence type="evidence at protein level"/>
<reference key="1">
    <citation type="journal article" date="1999" name="Nature">
        <title>Sequence and analysis of chromosome 2 of the plant Arabidopsis thaliana.</title>
        <authorList>
            <person name="Lin X."/>
            <person name="Kaul S."/>
            <person name="Rounsley S.D."/>
            <person name="Shea T.P."/>
            <person name="Benito M.-I."/>
            <person name="Town C.D."/>
            <person name="Fujii C.Y."/>
            <person name="Mason T.M."/>
            <person name="Bowman C.L."/>
            <person name="Barnstead M.E."/>
            <person name="Feldblyum T.V."/>
            <person name="Buell C.R."/>
            <person name="Ketchum K.A."/>
            <person name="Lee J.J."/>
            <person name="Ronning C.M."/>
            <person name="Koo H.L."/>
            <person name="Moffat K.S."/>
            <person name="Cronin L.A."/>
            <person name="Shen M."/>
            <person name="Pai G."/>
            <person name="Van Aken S."/>
            <person name="Umayam L."/>
            <person name="Tallon L.J."/>
            <person name="Gill J.E."/>
            <person name="Adams M.D."/>
            <person name="Carrera A.J."/>
            <person name="Creasy T.H."/>
            <person name="Goodman H.M."/>
            <person name="Somerville C.R."/>
            <person name="Copenhaver G.P."/>
            <person name="Preuss D."/>
            <person name="Nierman W.C."/>
            <person name="White O."/>
            <person name="Eisen J.A."/>
            <person name="Salzberg S.L."/>
            <person name="Fraser C.M."/>
            <person name="Venter J.C."/>
        </authorList>
    </citation>
    <scope>NUCLEOTIDE SEQUENCE [LARGE SCALE GENOMIC DNA]</scope>
    <source>
        <strain>cv. Columbia</strain>
    </source>
</reference>
<reference key="2">
    <citation type="journal article" date="2017" name="Plant J.">
        <title>Araport11: a complete reannotation of the Arabidopsis thaliana reference genome.</title>
        <authorList>
            <person name="Cheng C.Y."/>
            <person name="Krishnakumar V."/>
            <person name="Chan A.P."/>
            <person name="Thibaud-Nissen F."/>
            <person name="Schobel S."/>
            <person name="Town C.D."/>
        </authorList>
    </citation>
    <scope>GENOME REANNOTATION</scope>
    <source>
        <strain>cv. Columbia</strain>
    </source>
</reference>
<reference key="3">
    <citation type="journal article" date="2010" name="BMC Genomics">
        <title>Genome-wide cloning and sequence analysis of leucine-rich repeat receptor-like protein kinase genes in Arabidopsis thaliana.</title>
        <authorList>
            <person name="Gou X."/>
            <person name="He K."/>
            <person name="Yang H."/>
            <person name="Yuan T."/>
            <person name="Lin H."/>
            <person name="Clouse S.D."/>
            <person name="Li J."/>
        </authorList>
    </citation>
    <scope>NUCLEOTIDE SEQUENCE [LARGE SCALE MRNA]</scope>
    <source>
        <strain>cv. Columbia</strain>
    </source>
</reference>
<reference key="4">
    <citation type="submission" date="2006-07" db="EMBL/GenBank/DDBJ databases">
        <title>Large-scale analysis of RIKEN Arabidopsis full-length (RAFL) cDNAs.</title>
        <authorList>
            <person name="Totoki Y."/>
            <person name="Seki M."/>
            <person name="Ishida J."/>
            <person name="Nakajima M."/>
            <person name="Enju A."/>
            <person name="Kamiya A."/>
            <person name="Narusaka M."/>
            <person name="Shin-i T."/>
            <person name="Nakagawa M."/>
            <person name="Sakamoto N."/>
            <person name="Oishi K."/>
            <person name="Kohara Y."/>
            <person name="Kobayashi M."/>
            <person name="Toyoda A."/>
            <person name="Sakaki Y."/>
            <person name="Sakurai T."/>
            <person name="Iida K."/>
            <person name="Akiyama K."/>
            <person name="Satou M."/>
            <person name="Toyoda T."/>
            <person name="Konagaya A."/>
            <person name="Carninci P."/>
            <person name="Kawai J."/>
            <person name="Hayashizaki Y."/>
            <person name="Shinozaki K."/>
        </authorList>
    </citation>
    <scope>NUCLEOTIDE SEQUENCE [LARGE SCALE MRNA] OF 294-589</scope>
    <source>
        <strain>cv. Columbia</strain>
    </source>
</reference>
<reference key="5">
    <citation type="journal article" date="2008" name="Plant Cell">
        <title>Two leucine-rich repeat receptor kinases mediate signaling, linking cell wall biosynthesis and ACC synthase in Arabidopsis.</title>
        <authorList>
            <person name="Xu S.-L."/>
            <person name="Rahman A."/>
            <person name="Baskin T.I."/>
            <person name="Kieber J.J."/>
        </authorList>
    </citation>
    <scope>FUNCTION</scope>
    <scope>MUTAGENESIS OF LYS-336</scope>
    <scope>SUBCELLULAR LOCATION</scope>
    <scope>TISSUE SPECIFICITY</scope>
    <scope>DISRUPTION PHENOTYPE</scope>
    <scope>INTERACTION WITH ACS5 AND ACS9</scope>
</reference>
<feature type="signal peptide" evidence="4">
    <location>
        <begin position="1"/>
        <end position="28"/>
    </location>
</feature>
<feature type="chain" id="PRO_0000387512" description="LRR receptor-like serine/threonine-protein kinase FEI 2">
    <location>
        <begin position="29"/>
        <end position="589"/>
    </location>
</feature>
<feature type="topological domain" description="Extracellular" evidence="4">
    <location>
        <begin position="29"/>
        <end position="236"/>
    </location>
</feature>
<feature type="transmembrane region" description="Helical" evidence="4">
    <location>
        <begin position="237"/>
        <end position="257"/>
    </location>
</feature>
<feature type="topological domain" description="Cytoplasmic" evidence="4">
    <location>
        <begin position="258"/>
        <end position="589"/>
    </location>
</feature>
<feature type="repeat" description="LRR 1">
    <location>
        <begin position="72"/>
        <end position="96"/>
    </location>
</feature>
<feature type="repeat" description="LRR 2">
    <location>
        <begin position="97"/>
        <end position="120"/>
    </location>
</feature>
<feature type="repeat" description="LRR 3">
    <location>
        <begin position="122"/>
        <end position="144"/>
    </location>
</feature>
<feature type="repeat" description="LRR 4">
    <location>
        <begin position="145"/>
        <end position="168"/>
    </location>
</feature>
<feature type="repeat" description="LRR 5">
    <location>
        <begin position="170"/>
        <end position="193"/>
    </location>
</feature>
<feature type="domain" description="Protein kinase" evidence="5">
    <location>
        <begin position="304"/>
        <end position="576"/>
    </location>
</feature>
<feature type="active site" description="Proton acceptor" evidence="5 6">
    <location>
        <position position="427"/>
    </location>
</feature>
<feature type="binding site" evidence="5">
    <location>
        <begin position="310"/>
        <end position="318"/>
    </location>
    <ligand>
        <name>ATP</name>
        <dbReference type="ChEBI" id="CHEBI:30616"/>
    </ligand>
</feature>
<feature type="binding site" evidence="5">
    <location>
        <position position="332"/>
    </location>
    <ligand>
        <name>ATP</name>
        <dbReference type="ChEBI" id="CHEBI:30616"/>
    </ligand>
</feature>
<feature type="modified residue" description="Phosphoserine" evidence="2">
    <location>
        <position position="384"/>
    </location>
</feature>
<feature type="modified residue" description="Phosphothreonine" evidence="3">
    <location>
        <position position="460"/>
    </location>
</feature>
<feature type="modified residue" description="Phosphothreonine" evidence="3">
    <location>
        <position position="461"/>
    </location>
</feature>
<feature type="modified residue" description="Phosphothreonine" evidence="3">
    <location>
        <position position="466"/>
    </location>
</feature>
<feature type="modified residue" description="Phosphotyrosine" evidence="2">
    <location>
        <position position="474"/>
    </location>
</feature>
<feature type="glycosylation site" description="N-linked (GlcNAc...) asparagine" evidence="4">
    <location>
        <position position="119"/>
    </location>
</feature>
<feature type="glycosylation site" description="N-linked (GlcNAc...) asparagine" evidence="4">
    <location>
        <position position="143"/>
    </location>
</feature>
<feature type="glycosylation site" description="N-linked (GlcNAc...) asparagine" evidence="4">
    <location>
        <position position="175"/>
    </location>
</feature>
<feature type="glycosylation site" description="N-linked (GlcNAc...) asparagine" evidence="4">
    <location>
        <position position="215"/>
    </location>
</feature>
<feature type="glycosylation site" description="N-linked (GlcNAc...) asparagine" evidence="4">
    <location>
        <position position="219"/>
    </location>
</feature>
<feature type="mutagenesis site" description="Normal interaction with ACC synthases." evidence="7">
    <original>K</original>
    <variation>R</variation>
    <location>
        <position position="336"/>
    </location>
</feature>
<accession>C0LGL9</accession>
<accession>Q0WLU4</accession>
<accession>Q9ZQN5</accession>
<gene>
    <name type="primary">FEI2</name>
    <name type="ordered locus">At2g35620</name>
    <name type="ORF">T20F21.18</name>
</gene>
<organism>
    <name type="scientific">Arabidopsis thaliana</name>
    <name type="common">Mouse-ear cress</name>
    <dbReference type="NCBI Taxonomy" id="3702"/>
    <lineage>
        <taxon>Eukaryota</taxon>
        <taxon>Viridiplantae</taxon>
        <taxon>Streptophyta</taxon>
        <taxon>Embryophyta</taxon>
        <taxon>Tracheophyta</taxon>
        <taxon>Spermatophyta</taxon>
        <taxon>Magnoliopsida</taxon>
        <taxon>eudicotyledons</taxon>
        <taxon>Gunneridae</taxon>
        <taxon>Pentapetalae</taxon>
        <taxon>rosids</taxon>
        <taxon>malvids</taxon>
        <taxon>Brassicales</taxon>
        <taxon>Brassicaceae</taxon>
        <taxon>Camelineae</taxon>
        <taxon>Arabidopsis</taxon>
    </lineage>
</organism>
<name>FEI2_ARATH</name>
<dbReference type="EC" id="2.7.11.1"/>
<dbReference type="EMBL" id="AC006068">
    <property type="protein sequence ID" value="AAD15451.1"/>
    <property type="status" value="ALT_SEQ"/>
    <property type="molecule type" value="Genomic_DNA"/>
</dbReference>
<dbReference type="EMBL" id="CP002685">
    <property type="protein sequence ID" value="AEC09131.1"/>
    <property type="molecule type" value="Genomic_DNA"/>
</dbReference>
<dbReference type="EMBL" id="CP002685">
    <property type="protein sequence ID" value="AEC09132.1"/>
    <property type="molecule type" value="Genomic_DNA"/>
</dbReference>
<dbReference type="EMBL" id="CP002685">
    <property type="protein sequence ID" value="ANM61923.1"/>
    <property type="molecule type" value="Genomic_DNA"/>
</dbReference>
<dbReference type="EMBL" id="CP002685">
    <property type="protein sequence ID" value="ANM61924.1"/>
    <property type="molecule type" value="Genomic_DNA"/>
</dbReference>
<dbReference type="EMBL" id="FJ708709">
    <property type="protein sequence ID" value="ACN59304.1"/>
    <property type="molecule type" value="mRNA"/>
</dbReference>
<dbReference type="EMBL" id="AK230094">
    <property type="protein sequence ID" value="BAF01913.1"/>
    <property type="molecule type" value="mRNA"/>
</dbReference>
<dbReference type="PIR" id="H84770">
    <property type="entry name" value="H84770"/>
</dbReference>
<dbReference type="RefSeq" id="NP_001189684.1">
    <property type="nucleotide sequence ID" value="NM_001202755.2"/>
</dbReference>
<dbReference type="RefSeq" id="NP_001324112.1">
    <property type="nucleotide sequence ID" value="NM_001336566.1"/>
</dbReference>
<dbReference type="RefSeq" id="NP_001324113.1">
    <property type="nucleotide sequence ID" value="NM_001336565.1"/>
</dbReference>
<dbReference type="RefSeq" id="NP_181105.2">
    <property type="nucleotide sequence ID" value="NM_129116.5"/>
</dbReference>
<dbReference type="SMR" id="C0LGL9"/>
<dbReference type="BioGRID" id="3475">
    <property type="interactions" value="49"/>
</dbReference>
<dbReference type="FunCoup" id="C0LGL9">
    <property type="interactions" value="586"/>
</dbReference>
<dbReference type="IntAct" id="C0LGL9">
    <property type="interactions" value="47"/>
</dbReference>
<dbReference type="STRING" id="3702.C0LGL9"/>
<dbReference type="GlyCosmos" id="C0LGL9">
    <property type="glycosylation" value="5 sites, No reported glycans"/>
</dbReference>
<dbReference type="GlyGen" id="C0LGL9">
    <property type="glycosylation" value="5 sites"/>
</dbReference>
<dbReference type="PaxDb" id="3702-AT2G35620.1"/>
<dbReference type="ProteomicsDB" id="230774"/>
<dbReference type="EnsemblPlants" id="AT2G35620.1">
    <property type="protein sequence ID" value="AT2G35620.1"/>
    <property type="gene ID" value="AT2G35620"/>
</dbReference>
<dbReference type="EnsemblPlants" id="AT2G35620.2">
    <property type="protein sequence ID" value="AT2G35620.2"/>
    <property type="gene ID" value="AT2G35620"/>
</dbReference>
<dbReference type="EnsemblPlants" id="AT2G35620.3">
    <property type="protein sequence ID" value="AT2G35620.3"/>
    <property type="gene ID" value="AT2G35620"/>
</dbReference>
<dbReference type="EnsemblPlants" id="AT2G35620.4">
    <property type="protein sequence ID" value="AT2G35620.4"/>
    <property type="gene ID" value="AT2G35620"/>
</dbReference>
<dbReference type="GeneID" id="818130"/>
<dbReference type="Gramene" id="AT2G35620.1">
    <property type="protein sequence ID" value="AT2G35620.1"/>
    <property type="gene ID" value="AT2G35620"/>
</dbReference>
<dbReference type="Gramene" id="AT2G35620.2">
    <property type="protein sequence ID" value="AT2G35620.2"/>
    <property type="gene ID" value="AT2G35620"/>
</dbReference>
<dbReference type="Gramene" id="AT2G35620.3">
    <property type="protein sequence ID" value="AT2G35620.3"/>
    <property type="gene ID" value="AT2G35620"/>
</dbReference>
<dbReference type="Gramene" id="AT2G35620.4">
    <property type="protein sequence ID" value="AT2G35620.4"/>
    <property type="gene ID" value="AT2G35620"/>
</dbReference>
<dbReference type="KEGG" id="ath:AT2G35620"/>
<dbReference type="Araport" id="AT2G35620"/>
<dbReference type="TAIR" id="AT2G35620">
    <property type="gene designation" value="FEI2"/>
</dbReference>
<dbReference type="eggNOG" id="ENOG502RBVT">
    <property type="taxonomic scope" value="Eukaryota"/>
</dbReference>
<dbReference type="HOGENOM" id="CLU_000288_92_6_1"/>
<dbReference type="InParanoid" id="C0LGL9"/>
<dbReference type="OMA" id="KCDSKTK"/>
<dbReference type="PhylomeDB" id="C0LGL9"/>
<dbReference type="PRO" id="PR:C0LGL9"/>
<dbReference type="Proteomes" id="UP000006548">
    <property type="component" value="Chromosome 2"/>
</dbReference>
<dbReference type="ExpressionAtlas" id="C0LGL9">
    <property type="expression patterns" value="baseline and differential"/>
</dbReference>
<dbReference type="GO" id="GO:0005886">
    <property type="term" value="C:plasma membrane"/>
    <property type="evidence" value="ECO:0000314"/>
    <property type="project" value="TAIR"/>
</dbReference>
<dbReference type="GO" id="GO:0005524">
    <property type="term" value="F:ATP binding"/>
    <property type="evidence" value="ECO:0007669"/>
    <property type="project" value="UniProtKB-KW"/>
</dbReference>
<dbReference type="GO" id="GO:0016301">
    <property type="term" value="F:kinase activity"/>
    <property type="evidence" value="ECO:0000314"/>
    <property type="project" value="TAIR"/>
</dbReference>
<dbReference type="GO" id="GO:0106310">
    <property type="term" value="F:protein serine kinase activity"/>
    <property type="evidence" value="ECO:0007669"/>
    <property type="project" value="RHEA"/>
</dbReference>
<dbReference type="GO" id="GO:0004674">
    <property type="term" value="F:protein serine/threonine kinase activity"/>
    <property type="evidence" value="ECO:0007669"/>
    <property type="project" value="UniProtKB-KW"/>
</dbReference>
<dbReference type="GO" id="GO:0010192">
    <property type="term" value="P:mucilage biosynthetic process"/>
    <property type="evidence" value="ECO:0000315"/>
    <property type="project" value="TAIR"/>
</dbReference>
<dbReference type="GO" id="GO:0048354">
    <property type="term" value="P:mucilage biosynthetic process involved in seed coat development"/>
    <property type="evidence" value="ECO:0000315"/>
    <property type="project" value="TAIR"/>
</dbReference>
<dbReference type="GO" id="GO:0009664">
    <property type="term" value="P:plant-type cell wall organization"/>
    <property type="evidence" value="ECO:0000315"/>
    <property type="project" value="TAIR"/>
</dbReference>
<dbReference type="GO" id="GO:0009826">
    <property type="term" value="P:unidimensional cell growth"/>
    <property type="evidence" value="ECO:0000315"/>
    <property type="project" value="TAIR"/>
</dbReference>
<dbReference type="FunFam" id="3.80.10.10:FF:000101">
    <property type="entry name" value="LRR receptor-like serine/threonine-protein kinase ERECTA"/>
    <property type="match status" value="1"/>
</dbReference>
<dbReference type="FunFam" id="3.30.200.20:FF:000282">
    <property type="entry name" value="LRR receptor-like serine/threonine-protein kinase FEI 1"/>
    <property type="match status" value="1"/>
</dbReference>
<dbReference type="FunFam" id="1.10.510.10:FF:000146">
    <property type="entry name" value="LRR receptor-like serine/threonine-protein kinase IOS1"/>
    <property type="match status" value="1"/>
</dbReference>
<dbReference type="Gene3D" id="3.30.200.20">
    <property type="entry name" value="Phosphorylase Kinase, domain 1"/>
    <property type="match status" value="1"/>
</dbReference>
<dbReference type="Gene3D" id="3.80.10.10">
    <property type="entry name" value="Ribonuclease Inhibitor"/>
    <property type="match status" value="1"/>
</dbReference>
<dbReference type="Gene3D" id="1.10.510.10">
    <property type="entry name" value="Transferase(Phosphotransferase) domain 1"/>
    <property type="match status" value="1"/>
</dbReference>
<dbReference type="InterPro" id="IPR011009">
    <property type="entry name" value="Kinase-like_dom_sf"/>
</dbReference>
<dbReference type="InterPro" id="IPR001611">
    <property type="entry name" value="Leu-rich_rpt"/>
</dbReference>
<dbReference type="InterPro" id="IPR003591">
    <property type="entry name" value="Leu-rich_rpt_typical-subtyp"/>
</dbReference>
<dbReference type="InterPro" id="IPR032675">
    <property type="entry name" value="LRR_dom_sf"/>
</dbReference>
<dbReference type="InterPro" id="IPR013210">
    <property type="entry name" value="LRR_N_plant-typ"/>
</dbReference>
<dbReference type="InterPro" id="IPR000719">
    <property type="entry name" value="Prot_kinase_dom"/>
</dbReference>
<dbReference type="InterPro" id="IPR017441">
    <property type="entry name" value="Protein_kinase_ATP_BS"/>
</dbReference>
<dbReference type="InterPro" id="IPR008271">
    <property type="entry name" value="Ser/Thr_kinase_AS"/>
</dbReference>
<dbReference type="InterPro" id="IPR051420">
    <property type="entry name" value="Ser_Thr_Kinases_DiverseReg"/>
</dbReference>
<dbReference type="PANTHER" id="PTHR48005">
    <property type="entry name" value="LEUCINE RICH REPEAT KINASE 2"/>
    <property type="match status" value="1"/>
</dbReference>
<dbReference type="PANTHER" id="PTHR48005:SF13">
    <property type="entry name" value="SERINE_THREONINE-PROTEIN KINASE DDB_G0278509-RELATED"/>
    <property type="match status" value="1"/>
</dbReference>
<dbReference type="Pfam" id="PF13855">
    <property type="entry name" value="LRR_8"/>
    <property type="match status" value="1"/>
</dbReference>
<dbReference type="Pfam" id="PF08263">
    <property type="entry name" value="LRRNT_2"/>
    <property type="match status" value="1"/>
</dbReference>
<dbReference type="Pfam" id="PF00069">
    <property type="entry name" value="Pkinase"/>
    <property type="match status" value="1"/>
</dbReference>
<dbReference type="SMART" id="SM00369">
    <property type="entry name" value="LRR_TYP"/>
    <property type="match status" value="2"/>
</dbReference>
<dbReference type="SMART" id="SM00220">
    <property type="entry name" value="S_TKc"/>
    <property type="match status" value="1"/>
</dbReference>
<dbReference type="SUPFAM" id="SSF52058">
    <property type="entry name" value="L domain-like"/>
    <property type="match status" value="1"/>
</dbReference>
<dbReference type="SUPFAM" id="SSF56112">
    <property type="entry name" value="Protein kinase-like (PK-like)"/>
    <property type="match status" value="1"/>
</dbReference>
<dbReference type="PROSITE" id="PS00107">
    <property type="entry name" value="PROTEIN_KINASE_ATP"/>
    <property type="match status" value="1"/>
</dbReference>
<dbReference type="PROSITE" id="PS50011">
    <property type="entry name" value="PROTEIN_KINASE_DOM"/>
    <property type="match status" value="1"/>
</dbReference>
<dbReference type="PROSITE" id="PS00108">
    <property type="entry name" value="PROTEIN_KINASE_ST"/>
    <property type="match status" value="1"/>
</dbReference>
<evidence type="ECO:0000250" key="1"/>
<evidence type="ECO:0000250" key="2">
    <source>
        <dbReference type="UniProtKB" id="Q94AG2"/>
    </source>
</evidence>
<evidence type="ECO:0000250" key="3">
    <source>
        <dbReference type="UniProtKB" id="Q94F62"/>
    </source>
</evidence>
<evidence type="ECO:0000255" key="4"/>
<evidence type="ECO:0000255" key="5">
    <source>
        <dbReference type="PROSITE-ProRule" id="PRU00159"/>
    </source>
</evidence>
<evidence type="ECO:0000255" key="6">
    <source>
        <dbReference type="PROSITE-ProRule" id="PRU10027"/>
    </source>
</evidence>
<evidence type="ECO:0000269" key="7">
    <source>
    </source>
</evidence>
<evidence type="ECO:0000305" key="8"/>
<sequence length="589" mass="64355">MGICLMKRCCSWFLLISFLSALTNENEAISPDGEALLSFRNGVLASDGVIGLWRPEDPDPCNWKGVTCDAKTKRVIALSLTYHKLRGPLPPELGKLDQLRLLMLHNNALYQSIPASLGNCTALEGIYLQNNYITGTIPSEIGNLSGLKNLDLSNNNLNGAIPASLGQLKRLTKFNVSNNFLVGKIPSDGLLARLSRDSFNGNRNLCGKQIDIVCNDSGNSTASGSPTGQGGNNPKRLLISASATVGGLLLVALMCFWGCFLYKKLGRVESKSLVIDVGGGASIVMFHGDLPYASKDIIKKLESLNEEHIIGCGGFGTVYKLSMDDGNVFALKRIVKLNEGFDRFFERELEILGSIKHRYLVNLRGYCNSPTSKLLLYDYLPGGSLDEALHKRGEQLDWDSRVNIIIGAAKGLAYLHHDCSPRIIHRDIKSSNILLDGNLEARVSDFGLAKLLEDEESHITTIVAGTFGYLAPEYMQSGRATEKTDVYSFGVLVLEVLSGKLPTDASFIEKGFNIVGWLNFLISENRAKEIVDLSCEGVERESLDALLSIATKCVSSSPDERPTMHRVVQLLESEVMTPCPSDFYDSSSD</sequence>
<comment type="function">
    <text evidence="7">Involved in the signaling pathway that regulates cell wall function, including cellulose biosynthesis, likely via an 1-aminocyclopropane-1-carboxylic acid (ACC)-mediated signal (a precursor of ethylene).</text>
</comment>
<comment type="catalytic activity">
    <reaction>
        <text>L-seryl-[protein] + ATP = O-phospho-L-seryl-[protein] + ADP + H(+)</text>
        <dbReference type="Rhea" id="RHEA:17989"/>
        <dbReference type="Rhea" id="RHEA-COMP:9863"/>
        <dbReference type="Rhea" id="RHEA-COMP:11604"/>
        <dbReference type="ChEBI" id="CHEBI:15378"/>
        <dbReference type="ChEBI" id="CHEBI:29999"/>
        <dbReference type="ChEBI" id="CHEBI:30616"/>
        <dbReference type="ChEBI" id="CHEBI:83421"/>
        <dbReference type="ChEBI" id="CHEBI:456216"/>
        <dbReference type="EC" id="2.7.11.1"/>
    </reaction>
</comment>
<comment type="catalytic activity">
    <reaction>
        <text>L-threonyl-[protein] + ATP = O-phospho-L-threonyl-[protein] + ADP + H(+)</text>
        <dbReference type="Rhea" id="RHEA:46608"/>
        <dbReference type="Rhea" id="RHEA-COMP:11060"/>
        <dbReference type="Rhea" id="RHEA-COMP:11605"/>
        <dbReference type="ChEBI" id="CHEBI:15378"/>
        <dbReference type="ChEBI" id="CHEBI:30013"/>
        <dbReference type="ChEBI" id="CHEBI:30616"/>
        <dbReference type="ChEBI" id="CHEBI:61977"/>
        <dbReference type="ChEBI" id="CHEBI:456216"/>
        <dbReference type="EC" id="2.7.11.1"/>
    </reaction>
</comment>
<comment type="subunit">
    <text evidence="7">Interacts with the ACC synthases ACS5 and ACS9 but not ACS2, via the kinase domain.</text>
</comment>
<comment type="interaction">
    <interactant intactId="EBI-16921113">
        <id>C0LGL9</id>
    </interactant>
    <interactant intactId="EBI-20651541">
        <id>C0LGJ9</id>
        <label>At2g02780</label>
    </interactant>
    <organismsDiffer>false</organismsDiffer>
    <experiments>2</experiments>
</comment>
<comment type="subcellular location">
    <subcellularLocation>
        <location evidence="7">Cell membrane</location>
        <topology evidence="7">Single-pass type I membrane protein</topology>
    </subcellularLocation>
</comment>
<comment type="tissue specificity">
    <text evidence="7">Expressed in the root meristem and elongation zone, and in hypocotyls of etiolated seedlings.</text>
</comment>
<comment type="PTM">
    <text evidence="1">Autophosphorylated.</text>
</comment>
<comment type="disruption phenotype">
    <text evidence="7">No visible phenotype. Fei1 and fei2 double mutants exhibit disrupted anisotropic expansion (e.g. during hypocotyl elongation), impaired synthesis of cell wall polymers, and abnormal cellulose biosynthesis.</text>
</comment>
<comment type="miscellaneous">
    <text>'Fei' means fat in Chinese.</text>
</comment>
<comment type="similarity">
    <text evidence="5">Belongs to the protein kinase superfamily. Ser/Thr protein kinase family.</text>
</comment>
<comment type="sequence caution" evidence="8">
    <conflict type="erroneous gene model prediction">
        <sequence resource="EMBL-CDS" id="AAD15451"/>
    </conflict>
</comment>
<protein>
    <recommendedName>
        <fullName>LRR receptor-like serine/threonine-protein kinase FEI 2</fullName>
        <ecNumber>2.7.11.1</ecNumber>
    </recommendedName>
</protein>
<keyword id="KW-0067">ATP-binding</keyword>
<keyword id="KW-1003">Cell membrane</keyword>
<keyword id="KW-0325">Glycoprotein</keyword>
<keyword id="KW-0418">Kinase</keyword>
<keyword id="KW-0433">Leucine-rich repeat</keyword>
<keyword id="KW-0472">Membrane</keyword>
<keyword id="KW-0547">Nucleotide-binding</keyword>
<keyword id="KW-0597">Phosphoprotein</keyword>
<keyword id="KW-0675">Receptor</keyword>
<keyword id="KW-1185">Reference proteome</keyword>
<keyword id="KW-0677">Repeat</keyword>
<keyword id="KW-0723">Serine/threonine-protein kinase</keyword>
<keyword id="KW-0732">Signal</keyword>
<keyword id="KW-0808">Transferase</keyword>
<keyword id="KW-0812">Transmembrane</keyword>
<keyword id="KW-1133">Transmembrane helix</keyword>